<comment type="function">
    <text evidence="5">Ferredoxins are iron-sulfur proteins that transfer electrons in a wide variety of metabolic reactions.</text>
</comment>
<comment type="cofactor">
    <cofactor evidence="5">
        <name>[2Fe-2S] cluster</name>
        <dbReference type="ChEBI" id="CHEBI:190135"/>
    </cofactor>
    <text evidence="5">Binds 1 [2Fe-2S] cluster.</text>
</comment>
<comment type="subcellular location">
    <subcellularLocation>
        <location>Plastid</location>
        <location>Chloroplast</location>
    </subcellularLocation>
</comment>
<comment type="similarity">
    <text evidence="2">Belongs to the 2Fe2S plant-type ferredoxin family.</text>
</comment>
<keyword id="KW-0001">2Fe-2S</keyword>
<keyword id="KW-0150">Chloroplast</keyword>
<keyword id="KW-0903">Direct protein sequencing</keyword>
<keyword id="KW-0249">Electron transport</keyword>
<keyword id="KW-0408">Iron</keyword>
<keyword id="KW-0411">Iron-sulfur</keyword>
<keyword id="KW-0479">Metal-binding</keyword>
<keyword id="KW-0934">Plastid</keyword>
<keyword id="KW-0813">Transport</keyword>
<name>FER_ATRBE</name>
<dbReference type="SMR" id="P84872"/>
<dbReference type="GO" id="GO:0009570">
    <property type="term" value="C:chloroplast stroma"/>
    <property type="evidence" value="ECO:0007669"/>
    <property type="project" value="TreeGrafter"/>
</dbReference>
<dbReference type="GO" id="GO:0051537">
    <property type="term" value="F:2 iron, 2 sulfur cluster binding"/>
    <property type="evidence" value="ECO:0007669"/>
    <property type="project" value="UniProtKB-KW"/>
</dbReference>
<dbReference type="GO" id="GO:0009055">
    <property type="term" value="F:electron transfer activity"/>
    <property type="evidence" value="ECO:0007669"/>
    <property type="project" value="InterPro"/>
</dbReference>
<dbReference type="GO" id="GO:0046872">
    <property type="term" value="F:metal ion binding"/>
    <property type="evidence" value="ECO:0007669"/>
    <property type="project" value="UniProtKB-KW"/>
</dbReference>
<dbReference type="GO" id="GO:0022900">
    <property type="term" value="P:electron transport chain"/>
    <property type="evidence" value="ECO:0007669"/>
    <property type="project" value="InterPro"/>
</dbReference>
<dbReference type="CDD" id="cd00207">
    <property type="entry name" value="fer2"/>
    <property type="match status" value="1"/>
</dbReference>
<dbReference type="FunFam" id="3.10.20.30:FF:000014">
    <property type="entry name" value="Ferredoxin"/>
    <property type="match status" value="1"/>
</dbReference>
<dbReference type="Gene3D" id="3.10.20.30">
    <property type="match status" value="1"/>
</dbReference>
<dbReference type="InterPro" id="IPR036010">
    <property type="entry name" value="2Fe-2S_ferredoxin-like_sf"/>
</dbReference>
<dbReference type="InterPro" id="IPR001041">
    <property type="entry name" value="2Fe-2S_ferredoxin-type"/>
</dbReference>
<dbReference type="InterPro" id="IPR006058">
    <property type="entry name" value="2Fe2S_fd_BS"/>
</dbReference>
<dbReference type="InterPro" id="IPR012675">
    <property type="entry name" value="Beta-grasp_dom_sf"/>
</dbReference>
<dbReference type="InterPro" id="IPR010241">
    <property type="entry name" value="Fd_pln"/>
</dbReference>
<dbReference type="NCBIfam" id="TIGR02008">
    <property type="entry name" value="fdx_plant"/>
    <property type="match status" value="1"/>
</dbReference>
<dbReference type="PANTHER" id="PTHR43112">
    <property type="entry name" value="FERREDOXIN"/>
    <property type="match status" value="1"/>
</dbReference>
<dbReference type="PANTHER" id="PTHR43112:SF3">
    <property type="entry name" value="FERREDOXIN-2, CHLOROPLASTIC"/>
    <property type="match status" value="1"/>
</dbReference>
<dbReference type="Pfam" id="PF00111">
    <property type="entry name" value="Fer2"/>
    <property type="match status" value="1"/>
</dbReference>
<dbReference type="SUPFAM" id="SSF54292">
    <property type="entry name" value="2Fe-2S ferredoxin-like"/>
    <property type="match status" value="1"/>
</dbReference>
<dbReference type="PROSITE" id="PS00197">
    <property type="entry name" value="2FE2S_FER_1"/>
    <property type="match status" value="1"/>
</dbReference>
<dbReference type="PROSITE" id="PS51085">
    <property type="entry name" value="2FE2S_FER_2"/>
    <property type="match status" value="1"/>
</dbReference>
<organism>
    <name type="scientific">Atropa belladonna</name>
    <name type="common">Belladonna</name>
    <name type="synonym">Deadly nightshade</name>
    <dbReference type="NCBI Taxonomy" id="33113"/>
    <lineage>
        <taxon>Eukaryota</taxon>
        <taxon>Viridiplantae</taxon>
        <taxon>Streptophyta</taxon>
        <taxon>Embryophyta</taxon>
        <taxon>Tracheophyta</taxon>
        <taxon>Spermatophyta</taxon>
        <taxon>Magnoliopsida</taxon>
        <taxon>eudicotyledons</taxon>
        <taxon>Gunneridae</taxon>
        <taxon>Pentapetalae</taxon>
        <taxon>asterids</taxon>
        <taxon>lamiids</taxon>
        <taxon>Solanales</taxon>
        <taxon>Solanaceae</taxon>
        <taxon>Solanoideae</taxon>
        <taxon>Hyoscyameae</taxon>
        <taxon>Atropa</taxon>
    </lineage>
</organism>
<sequence>ATYKVKLVTPDGPVEFDCPDDVYILDQAEEEGHELPYSCRAGSCSSCAGKVSAGTVDQSDGNFLDDDQMADGFVLTCVAYPQSDVTIETHKEEELTG</sequence>
<evidence type="ECO:0000250" key="1">
    <source>
        <dbReference type="UniProtKB" id="P0A3C8"/>
    </source>
</evidence>
<evidence type="ECO:0000255" key="2"/>
<evidence type="ECO:0000255" key="3">
    <source>
        <dbReference type="PROSITE-ProRule" id="PRU00465"/>
    </source>
</evidence>
<evidence type="ECO:0000269" key="4">
    <source>
    </source>
</evidence>
<evidence type="ECO:0000305" key="5"/>
<accession>P84872</accession>
<feature type="chain" id="PRO_0000245099" description="Ferredoxin">
    <location>
        <begin position="1"/>
        <end position="97"/>
    </location>
</feature>
<feature type="domain" description="2Fe-2S ferredoxin-type" evidence="1 3">
    <location>
        <begin position="3"/>
        <end position="93"/>
    </location>
</feature>
<feature type="binding site" evidence="1 3">
    <location>
        <position position="39"/>
    </location>
    <ligand>
        <name>[2Fe-2S] cluster</name>
        <dbReference type="ChEBI" id="CHEBI:190135"/>
    </ligand>
</feature>
<feature type="binding site" evidence="1 3">
    <location>
        <position position="44"/>
    </location>
    <ligand>
        <name>[2Fe-2S] cluster</name>
        <dbReference type="ChEBI" id="CHEBI:190135"/>
    </ligand>
</feature>
<feature type="binding site" evidence="1 3">
    <location>
        <position position="47"/>
    </location>
    <ligand>
        <name>[2Fe-2S] cluster</name>
        <dbReference type="ChEBI" id="CHEBI:190135"/>
    </ligand>
</feature>
<feature type="binding site" evidence="1 3">
    <location>
        <position position="77"/>
    </location>
    <ligand>
        <name>[2Fe-2S] cluster</name>
        <dbReference type="ChEBI" id="CHEBI:190135"/>
    </ligand>
</feature>
<protein>
    <recommendedName>
        <fullName>Ferredoxin</fullName>
    </recommendedName>
</protein>
<reference evidence="5" key="1">
    <citation type="journal article" date="2005" name="Biol. Pharm. Bull.">
        <title>Amino acid sequences of ferredoxins from Atropa belladonna and Hyoscyamus niger: their similarities to those in other tropane-alkaloid-containing plants.</title>
        <authorList>
            <person name="Mino Y."/>
            <person name="Yukita M."/>
            <person name="Hiratsuka N."/>
            <person name="Wariishi H."/>
        </authorList>
    </citation>
    <scope>PROTEIN SEQUENCE</scope>
    <source>
        <tissue evidence="4">Leaf</tissue>
    </source>
</reference>
<proteinExistence type="evidence at protein level"/>